<name>MGAT2_ARATH</name>
<feature type="chain" id="PRO_0000439832" description="Alpha-1,6-mannosyl-glycoprotein 2-beta-N-acetylglucosaminyltransferase">
    <location>
        <begin position="1"/>
        <end position="430"/>
    </location>
</feature>
<feature type="topological domain" description="Cytoplasmic" evidence="6">
    <location>
        <begin position="1"/>
        <end position="12"/>
    </location>
</feature>
<feature type="transmembrane region" description="Helical; Signal-anchor for type II membrane protein" evidence="2">
    <location>
        <begin position="13"/>
        <end position="35"/>
    </location>
</feature>
<feature type="topological domain" description="Lumenal" evidence="6">
    <location>
        <begin position="36"/>
        <end position="430"/>
    </location>
</feature>
<feature type="binding site" evidence="1">
    <location>
        <begin position="104"/>
        <end position="108"/>
    </location>
    <ligand>
        <name>substrate</name>
    </ligand>
</feature>
<feature type="binding site" evidence="1">
    <location>
        <position position="135"/>
    </location>
    <ligand>
        <name>substrate</name>
    </ligand>
</feature>
<feature type="binding site" evidence="1">
    <location>
        <begin position="205"/>
        <end position="209"/>
    </location>
    <ligand>
        <name>substrate</name>
    </ligand>
</feature>
<feature type="binding site" evidence="1">
    <location>
        <position position="237"/>
    </location>
    <ligand>
        <name>Mn(2+)</name>
        <dbReference type="ChEBI" id="CHEBI:29035"/>
    </ligand>
</feature>
<feature type="binding site" evidence="1">
    <location>
        <position position="345"/>
    </location>
    <ligand>
        <name>Mn(2+)</name>
        <dbReference type="ChEBI" id="CHEBI:29035"/>
    </ligand>
</feature>
<feature type="glycosylation site" description="N-linked (GlcNAc...) asparagine" evidence="3">
    <location>
        <position position="41"/>
    </location>
</feature>
<feature type="glycosylation site" description="N-linked (GlcNAc...) asparagine" evidence="3">
    <location>
        <position position="61"/>
    </location>
</feature>
<feature type="glycosylation site" description="N-linked (GlcNAc...) asparagine" evidence="3">
    <location>
        <position position="295"/>
    </location>
</feature>
<feature type="disulfide bond" evidence="1">
    <location>
        <begin position="177"/>
        <end position="188"/>
    </location>
</feature>
<feature type="disulfide bond" evidence="1">
    <location>
        <begin position="259"/>
        <end position="262"/>
    </location>
</feature>
<feature type="disulfide bond" evidence="1">
    <location>
        <begin position="310"/>
        <end position="414"/>
    </location>
</feature>
<comment type="function">
    <text evidence="4">Catalyzes an essential step in the conversion of oligo-mannose and hybrid to complex N-glycans.</text>
</comment>
<comment type="catalytic activity">
    <reaction evidence="4">
        <text>an N(4)-{beta-D-GlcNAc-(1-&gt;2)-alpha-D-Man-(1-&gt;3)-[alpha-D-Man-(1-&gt;6)]-beta-D-Man-(1-&gt;4)-beta-D-GlcNAc-(1-&gt;4)-beta-D-GlcNAc}-L-asparaginyl-[protein] + UDP-N-acetyl-alpha-D-glucosamine = N(4)-{beta-D-GlcNAc-(1-&gt;2)-alpha-D-Man-(1-&gt;3)-[beta-D-GlcNAc-(1-&gt;2)-alpha-D-Man-(1-&gt;6)]-beta-D-Man-(1-&gt;4)-beta-D-GlcNAc-(1-&gt;4)-beta-D-GlcNAc}-L-asparaginyl-[protein] + UDP + H(+)</text>
        <dbReference type="Rhea" id="RHEA:12941"/>
        <dbReference type="Rhea" id="RHEA-COMP:13526"/>
        <dbReference type="Rhea" id="RHEA-COMP:14369"/>
        <dbReference type="ChEBI" id="CHEBI:15378"/>
        <dbReference type="ChEBI" id="CHEBI:57705"/>
        <dbReference type="ChEBI" id="CHEBI:58223"/>
        <dbReference type="ChEBI" id="CHEBI:60615"/>
        <dbReference type="ChEBI" id="CHEBI:60651"/>
        <dbReference type="EC" id="2.4.1.143"/>
    </reaction>
</comment>
<comment type="cofactor">
    <cofactor evidence="1">
        <name>Mn(2+)</name>
        <dbReference type="ChEBI" id="CHEBI:29035"/>
    </cofactor>
</comment>
<comment type="pathway">
    <text evidence="4">Protein modification; protein glycosylation.</text>
</comment>
<comment type="subcellular location">
    <subcellularLocation>
        <location evidence="6">Golgi apparatus membrane</location>
        <topology evidence="2">Single-pass type II membrane protein</topology>
    </subcellularLocation>
</comment>
<comment type="similarity">
    <text evidence="6">Belongs to the glycosyltransferase 16 (GT16) protein family.</text>
</comment>
<comment type="sequence caution" evidence="6">
    <conflict type="erroneous gene model prediction">
        <sequence resource="EMBL-CDS" id="AAD29068"/>
    </conflict>
</comment>
<protein>
    <recommendedName>
        <fullName evidence="6">Alpha-1,6-mannosyl-glycoprotein 2-beta-N-acetylglucosaminyltransferase</fullName>
        <ecNumber evidence="4">2.4.1.143</ecNumber>
    </recommendedName>
    <alternativeName>
        <fullName evidence="5">Beta-1,2-N-acetylglucosaminyltransferase II</fullName>
    </alternativeName>
    <alternativeName>
        <fullName evidence="5">GlcNAc-T II</fullName>
        <shortName evidence="5">GNT-II</shortName>
    </alternativeName>
    <alternativeName>
        <fullName evidence="6">Mannoside acetylglucosaminyltransferase 2</fullName>
    </alternativeName>
    <alternativeName>
        <fullName evidence="5">N-glycosyl-oligosaccharide-glycoprotein N-acetylglucosaminyltransferase II</fullName>
    </alternativeName>
</protein>
<dbReference type="EC" id="2.4.1.143" evidence="4"/>
<dbReference type="EMBL" id="AJ249274">
    <property type="protein sequence ID" value="CAC08806.1"/>
    <property type="molecule type" value="mRNA"/>
</dbReference>
<dbReference type="EMBL" id="KJ138918">
    <property type="protein sequence ID" value="AHL38858.1"/>
    <property type="molecule type" value="mRNA"/>
</dbReference>
<dbReference type="EMBL" id="AC007018">
    <property type="protein sequence ID" value="AAD29068.1"/>
    <property type="status" value="ALT_SEQ"/>
    <property type="molecule type" value="Genomic_DNA"/>
</dbReference>
<dbReference type="EMBL" id="CP002685">
    <property type="protein sequence ID" value="AEC05916.1"/>
    <property type="molecule type" value="Genomic_DNA"/>
</dbReference>
<dbReference type="PIR" id="B84467">
    <property type="entry name" value="B84467"/>
</dbReference>
<dbReference type="RefSeq" id="NP_178601.2">
    <property type="nucleotide sequence ID" value="NM_126556.3"/>
</dbReference>
<dbReference type="SMR" id="Q9FT88"/>
<dbReference type="FunCoup" id="Q9FT88">
    <property type="interactions" value="1934"/>
</dbReference>
<dbReference type="STRING" id="3702.Q9FT88"/>
<dbReference type="CAZy" id="GT16">
    <property type="family name" value="Glycosyltransferase Family 16"/>
</dbReference>
<dbReference type="GlyCosmos" id="Q9FT88">
    <property type="glycosylation" value="3 sites, No reported glycans"/>
</dbReference>
<dbReference type="GlyGen" id="Q9FT88">
    <property type="glycosylation" value="3 sites"/>
</dbReference>
<dbReference type="SwissPalm" id="Q9FT88"/>
<dbReference type="PaxDb" id="3702-AT2G05320.1"/>
<dbReference type="ProteomicsDB" id="238289"/>
<dbReference type="EnsemblPlants" id="AT2G05320.1">
    <property type="protein sequence ID" value="AT2G05320.1"/>
    <property type="gene ID" value="AT2G05320"/>
</dbReference>
<dbReference type="GeneID" id="815080"/>
<dbReference type="Gramene" id="AT2G05320.1">
    <property type="protein sequence ID" value="AT2G05320.1"/>
    <property type="gene ID" value="AT2G05320"/>
</dbReference>
<dbReference type="KEGG" id="ath:AT2G05320"/>
<dbReference type="Araport" id="AT2G05320"/>
<dbReference type="TAIR" id="AT2G05320">
    <property type="gene designation" value="GNT-II"/>
</dbReference>
<dbReference type="eggNOG" id="KOG2791">
    <property type="taxonomic scope" value="Eukaryota"/>
</dbReference>
<dbReference type="HOGENOM" id="CLU_032753_1_0_1"/>
<dbReference type="InParanoid" id="Q9FT88"/>
<dbReference type="OMA" id="FWSAEIN"/>
<dbReference type="PhylomeDB" id="Q9FT88"/>
<dbReference type="BioCyc" id="MetaCyc:MONOMER-20298"/>
<dbReference type="UniPathway" id="UPA00378"/>
<dbReference type="PRO" id="PR:Q9FT88"/>
<dbReference type="Proteomes" id="UP000006548">
    <property type="component" value="Chromosome 2"/>
</dbReference>
<dbReference type="ExpressionAtlas" id="Q9FT88">
    <property type="expression patterns" value="baseline and differential"/>
</dbReference>
<dbReference type="GO" id="GO:0000139">
    <property type="term" value="C:Golgi membrane"/>
    <property type="evidence" value="ECO:0007669"/>
    <property type="project" value="UniProtKB-SubCell"/>
</dbReference>
<dbReference type="GO" id="GO:0005795">
    <property type="term" value="C:Golgi stack"/>
    <property type="evidence" value="ECO:0007669"/>
    <property type="project" value="InterPro"/>
</dbReference>
<dbReference type="GO" id="GO:0008455">
    <property type="term" value="F:alpha-1,6-mannosylglycoprotein 2-beta-N-acetylglucosaminyltransferase activity"/>
    <property type="evidence" value="ECO:0000314"/>
    <property type="project" value="UniProtKB"/>
</dbReference>
<dbReference type="GO" id="GO:0046872">
    <property type="term" value="F:metal ion binding"/>
    <property type="evidence" value="ECO:0007669"/>
    <property type="project" value="UniProtKB-KW"/>
</dbReference>
<dbReference type="GO" id="GO:0009312">
    <property type="term" value="P:oligosaccharide biosynthetic process"/>
    <property type="evidence" value="ECO:0000314"/>
    <property type="project" value="UniProtKB"/>
</dbReference>
<dbReference type="GO" id="GO:0006486">
    <property type="term" value="P:protein glycosylation"/>
    <property type="evidence" value="ECO:0007669"/>
    <property type="project" value="UniProtKB-UniPathway"/>
</dbReference>
<dbReference type="FunFam" id="3.90.550.10:FF:000257">
    <property type="entry name" value="Alpha-1,6-mannosyl-glycoprotein 2-beta-N-acetylglucosaminyltransferase"/>
    <property type="match status" value="1"/>
</dbReference>
<dbReference type="Gene3D" id="3.90.550.10">
    <property type="entry name" value="Spore Coat Polysaccharide Biosynthesis Protein SpsA, Chain A"/>
    <property type="match status" value="1"/>
</dbReference>
<dbReference type="InterPro" id="IPR007754">
    <property type="entry name" value="GlcNAc_II"/>
</dbReference>
<dbReference type="InterPro" id="IPR029044">
    <property type="entry name" value="Nucleotide-diphossugar_trans"/>
</dbReference>
<dbReference type="PANTHER" id="PTHR12871:SF0">
    <property type="entry name" value="ALPHA-1,6-MANNOSYL-GLYCOPROTEIN 2-BETA-N-ACETYLGLUCOSAMINYLTRANSFERASE"/>
    <property type="match status" value="1"/>
</dbReference>
<dbReference type="PANTHER" id="PTHR12871">
    <property type="entry name" value="BETA-1,2-N-ACETYLGLUCOSAMINYLTRANSFERASE II"/>
    <property type="match status" value="1"/>
</dbReference>
<dbReference type="Pfam" id="PF05060">
    <property type="entry name" value="MGAT2"/>
    <property type="match status" value="1"/>
</dbReference>
<dbReference type="SUPFAM" id="SSF53448">
    <property type="entry name" value="Nucleotide-diphospho-sugar transferases"/>
    <property type="match status" value="1"/>
</dbReference>
<sequence length="430" mass="48947">MANLWKKQRLRDTGLCRLGILFAVTLSIVLMLVSVPRTALNGSSIDDDLDGLDKDLEAKLNASLLSVARGNRMSLRLHRRNHFSPRNTDLFPDLAKDRVVIVLYVHNRAQYFRVTVESLSKVKGISETLLIVSHDGYFEEMNRIVESIKFCQVKQIFSPYSPHIYRTSFPGVTLNDCKNKGDEAKGHCEGNPDQYGNHRSPKIVSLKHHWWWMMNTVWDGLEETKGHEGHILFIEEDHFLFPNAYRNIQTLTRLKPAKCPDCFAANLAPSDVKSRGEGLESLVAERMGNVGYSFNRSVWENIHQKAREFCFFDDYNWDITMWATVFPSFGSPVYTLRGPRTSAVHFGKCGLHQGRGDEGDCIDNGVVNIEVKETDKVVNIKEGWGVRVYKHQAGYKAGFEGWGGWGDDRDRHLCLDFATMYRYSSSSASP</sequence>
<reference key="1">
    <citation type="journal article" date="1999" name="Glycoconj. J.">
        <title>Molecular cloning of cDNA encoding N-acetylglucosaminyltransferase II from Arabidopsis thaliana.</title>
        <authorList>
            <person name="Strasser R."/>
            <person name="Steinkellner H."/>
            <person name="Boren M."/>
            <person name="Altmann F."/>
            <person name="Mach L."/>
            <person name="Gloessl J."/>
            <person name="Mucha J."/>
        </authorList>
    </citation>
    <scope>NUCLEOTIDE SEQUENCE [MRNA]</scope>
    <scope>FUNCTION</scope>
    <scope>CATALYTIC ACTIVITY</scope>
    <source>
        <strain>cv. Columbia</strain>
    </source>
</reference>
<reference key="2">
    <citation type="journal article" date="2014" name="Plant J.">
        <title>The plant glycosyltransferase clone collection for functional genomics.</title>
        <authorList>
            <person name="Lao J."/>
            <person name="Oikawa A."/>
            <person name="Bromley J.R."/>
            <person name="McInerney P."/>
            <person name="Suttangkakul A."/>
            <person name="Smith-Moritz A.M."/>
            <person name="Plahar H."/>
            <person name="Chiu T.-Y."/>
            <person name="Gonzalez Fernandez-Nino S.M.G."/>
            <person name="Ebert B."/>
            <person name="Yang F."/>
            <person name="Christiansen K.M."/>
            <person name="Hansen S.F."/>
            <person name="Stonebloom S."/>
            <person name="Adams P.D."/>
            <person name="Ronald P.C."/>
            <person name="Hillson N.J."/>
            <person name="Hadi M.Z."/>
            <person name="Vega-Sanchez M.E."/>
            <person name="Loque D."/>
            <person name="Scheller H.V."/>
            <person name="Heazlewood J.L."/>
        </authorList>
    </citation>
    <scope>NUCLEOTIDE SEQUENCE [MRNA]</scope>
    <scope>GENE FAMILY</scope>
    <source>
        <strain>cv. Columbia</strain>
    </source>
</reference>
<reference key="3">
    <citation type="journal article" date="1999" name="Nature">
        <title>Sequence and analysis of chromosome 2 of the plant Arabidopsis thaliana.</title>
        <authorList>
            <person name="Lin X."/>
            <person name="Kaul S."/>
            <person name="Rounsley S.D."/>
            <person name="Shea T.P."/>
            <person name="Benito M.-I."/>
            <person name="Town C.D."/>
            <person name="Fujii C.Y."/>
            <person name="Mason T.M."/>
            <person name="Bowman C.L."/>
            <person name="Barnstead M.E."/>
            <person name="Feldblyum T.V."/>
            <person name="Buell C.R."/>
            <person name="Ketchum K.A."/>
            <person name="Lee J.J."/>
            <person name="Ronning C.M."/>
            <person name="Koo H.L."/>
            <person name="Moffat K.S."/>
            <person name="Cronin L.A."/>
            <person name="Shen M."/>
            <person name="Pai G."/>
            <person name="Van Aken S."/>
            <person name="Umayam L."/>
            <person name="Tallon L.J."/>
            <person name="Gill J.E."/>
            <person name="Adams M.D."/>
            <person name="Carrera A.J."/>
            <person name="Creasy T.H."/>
            <person name="Goodman H.M."/>
            <person name="Somerville C.R."/>
            <person name="Copenhaver G.P."/>
            <person name="Preuss D."/>
            <person name="Nierman W.C."/>
            <person name="White O."/>
            <person name="Eisen J.A."/>
            <person name="Salzberg S.L."/>
            <person name="Fraser C.M."/>
            <person name="Venter J.C."/>
        </authorList>
    </citation>
    <scope>NUCLEOTIDE SEQUENCE [LARGE SCALE GENOMIC DNA]</scope>
    <source>
        <strain>cv. Columbia</strain>
    </source>
</reference>
<reference key="4">
    <citation type="journal article" date="2017" name="Plant J.">
        <title>Araport11: a complete reannotation of the Arabidopsis thaliana reference genome.</title>
        <authorList>
            <person name="Cheng C.Y."/>
            <person name="Krishnakumar V."/>
            <person name="Chan A.P."/>
            <person name="Thibaud-Nissen F."/>
            <person name="Schobel S."/>
            <person name="Town C.D."/>
        </authorList>
    </citation>
    <scope>GENOME REANNOTATION</scope>
    <source>
        <strain>cv. Columbia</strain>
    </source>
</reference>
<accession>Q9FT88</accession>
<accession>Q9SJ30</accession>
<evidence type="ECO:0000250" key="1">
    <source>
        <dbReference type="UniProtKB" id="Q10469"/>
    </source>
</evidence>
<evidence type="ECO:0000255" key="2"/>
<evidence type="ECO:0000255" key="3">
    <source>
        <dbReference type="PROSITE-ProRule" id="PRU00498"/>
    </source>
</evidence>
<evidence type="ECO:0000269" key="4">
    <source>
    </source>
</evidence>
<evidence type="ECO:0000303" key="5">
    <source>
    </source>
</evidence>
<evidence type="ECO:0000305" key="6"/>
<evidence type="ECO:0000312" key="7">
    <source>
        <dbReference type="Araport" id="AT2G05320"/>
    </source>
</evidence>
<evidence type="ECO:0000312" key="8">
    <source>
        <dbReference type="EMBL" id="AAD29068.1"/>
    </source>
</evidence>
<gene>
    <name evidence="5" type="primary">GNT2</name>
    <name evidence="7" type="ordered locus">At2g05320</name>
    <name evidence="8" type="ORF">F5G3.22</name>
</gene>
<proteinExistence type="evidence at protein level"/>
<keyword id="KW-1015">Disulfide bond</keyword>
<keyword id="KW-0325">Glycoprotein</keyword>
<keyword id="KW-0328">Glycosyltransferase</keyword>
<keyword id="KW-0333">Golgi apparatus</keyword>
<keyword id="KW-0464">Manganese</keyword>
<keyword id="KW-0472">Membrane</keyword>
<keyword id="KW-0479">Metal-binding</keyword>
<keyword id="KW-1185">Reference proteome</keyword>
<keyword id="KW-0735">Signal-anchor</keyword>
<keyword id="KW-0808">Transferase</keyword>
<keyword id="KW-0812">Transmembrane</keyword>
<keyword id="KW-1133">Transmembrane helix</keyword>
<organism>
    <name type="scientific">Arabidopsis thaliana</name>
    <name type="common">Mouse-ear cress</name>
    <dbReference type="NCBI Taxonomy" id="3702"/>
    <lineage>
        <taxon>Eukaryota</taxon>
        <taxon>Viridiplantae</taxon>
        <taxon>Streptophyta</taxon>
        <taxon>Embryophyta</taxon>
        <taxon>Tracheophyta</taxon>
        <taxon>Spermatophyta</taxon>
        <taxon>Magnoliopsida</taxon>
        <taxon>eudicotyledons</taxon>
        <taxon>Gunneridae</taxon>
        <taxon>Pentapetalae</taxon>
        <taxon>rosids</taxon>
        <taxon>malvids</taxon>
        <taxon>Brassicales</taxon>
        <taxon>Brassicaceae</taxon>
        <taxon>Camelineae</taxon>
        <taxon>Arabidopsis</taxon>
    </lineage>
</organism>